<reference key="1">
    <citation type="submission" date="2006-09" db="EMBL/GenBank/DDBJ databases">
        <title>Complete sequence of Rhodopseudomonas palustris BisA53.</title>
        <authorList>
            <consortium name="US DOE Joint Genome Institute"/>
            <person name="Copeland A."/>
            <person name="Lucas S."/>
            <person name="Lapidus A."/>
            <person name="Barry K."/>
            <person name="Detter J.C."/>
            <person name="Glavina del Rio T."/>
            <person name="Hammon N."/>
            <person name="Israni S."/>
            <person name="Dalin E."/>
            <person name="Tice H."/>
            <person name="Pitluck S."/>
            <person name="Chain P."/>
            <person name="Malfatti S."/>
            <person name="Shin M."/>
            <person name="Vergez L."/>
            <person name="Schmutz J."/>
            <person name="Larimer F."/>
            <person name="Land M."/>
            <person name="Hauser L."/>
            <person name="Pelletier D.A."/>
            <person name="Kyrpides N."/>
            <person name="Kim E."/>
            <person name="Harwood C.S."/>
            <person name="Oda Y."/>
            <person name="Richardson P."/>
        </authorList>
    </citation>
    <scope>NUCLEOTIDE SEQUENCE [LARGE SCALE GENOMIC DNA]</scope>
    <source>
        <strain>BisA53</strain>
    </source>
</reference>
<name>RLMH_RHOP5</name>
<sequence length="160" mass="17951">MRLSVIAIGRLKQGPERELAERYRERFDETGRKLGFRGLEVHEIAESRARDVPTRMAEEAAAMVALVPERAMLVAMDERGQNLDSIGFAQKLAGWRDQSVPQTIFLIGGADGLSPELRRKAKLSVSFGAATWPHQMLRVMLLEQIYRAATILAGHPYHRA</sequence>
<gene>
    <name evidence="1" type="primary">rlmH</name>
    <name type="ordered locus">RPE_0269</name>
</gene>
<accession>Q07V06</accession>
<dbReference type="EC" id="2.1.1.177" evidence="1"/>
<dbReference type="EMBL" id="CP000463">
    <property type="protein sequence ID" value="ABJ04228.1"/>
    <property type="molecule type" value="Genomic_DNA"/>
</dbReference>
<dbReference type="SMR" id="Q07V06"/>
<dbReference type="STRING" id="316055.RPE_0269"/>
<dbReference type="KEGG" id="rpe:RPE_0269"/>
<dbReference type="eggNOG" id="COG1576">
    <property type="taxonomic scope" value="Bacteria"/>
</dbReference>
<dbReference type="HOGENOM" id="CLU_100552_1_1_5"/>
<dbReference type="OrthoDB" id="9806643at2"/>
<dbReference type="GO" id="GO:0005737">
    <property type="term" value="C:cytoplasm"/>
    <property type="evidence" value="ECO:0007669"/>
    <property type="project" value="UniProtKB-SubCell"/>
</dbReference>
<dbReference type="GO" id="GO:0070038">
    <property type="term" value="F:rRNA (pseudouridine-N3-)-methyltransferase activity"/>
    <property type="evidence" value="ECO:0007669"/>
    <property type="project" value="UniProtKB-UniRule"/>
</dbReference>
<dbReference type="CDD" id="cd18081">
    <property type="entry name" value="RlmH-like"/>
    <property type="match status" value="1"/>
</dbReference>
<dbReference type="Gene3D" id="3.40.1280.10">
    <property type="match status" value="1"/>
</dbReference>
<dbReference type="HAMAP" id="MF_00658">
    <property type="entry name" value="23SrRNA_methyltr_H"/>
    <property type="match status" value="1"/>
</dbReference>
<dbReference type="InterPro" id="IPR029028">
    <property type="entry name" value="Alpha/beta_knot_MTases"/>
</dbReference>
<dbReference type="InterPro" id="IPR003742">
    <property type="entry name" value="RlmH-like"/>
</dbReference>
<dbReference type="InterPro" id="IPR029026">
    <property type="entry name" value="tRNA_m1G_MTases_N"/>
</dbReference>
<dbReference type="NCBIfam" id="NF000989">
    <property type="entry name" value="PRK00103.2-3"/>
    <property type="match status" value="1"/>
</dbReference>
<dbReference type="NCBIfam" id="NF000991">
    <property type="entry name" value="PRK00103.2-5"/>
    <property type="match status" value="1"/>
</dbReference>
<dbReference type="PANTHER" id="PTHR33603">
    <property type="entry name" value="METHYLTRANSFERASE"/>
    <property type="match status" value="1"/>
</dbReference>
<dbReference type="PANTHER" id="PTHR33603:SF1">
    <property type="entry name" value="RIBOSOMAL RNA LARGE SUBUNIT METHYLTRANSFERASE H"/>
    <property type="match status" value="1"/>
</dbReference>
<dbReference type="Pfam" id="PF02590">
    <property type="entry name" value="SPOUT_MTase"/>
    <property type="match status" value="1"/>
</dbReference>
<dbReference type="PIRSF" id="PIRSF004505">
    <property type="entry name" value="MT_bac"/>
    <property type="match status" value="1"/>
</dbReference>
<dbReference type="SUPFAM" id="SSF75217">
    <property type="entry name" value="alpha/beta knot"/>
    <property type="match status" value="1"/>
</dbReference>
<evidence type="ECO:0000255" key="1">
    <source>
        <dbReference type="HAMAP-Rule" id="MF_00658"/>
    </source>
</evidence>
<keyword id="KW-0963">Cytoplasm</keyword>
<keyword id="KW-0489">Methyltransferase</keyword>
<keyword id="KW-0698">rRNA processing</keyword>
<keyword id="KW-0949">S-adenosyl-L-methionine</keyword>
<keyword id="KW-0808">Transferase</keyword>
<protein>
    <recommendedName>
        <fullName evidence="1">Ribosomal RNA large subunit methyltransferase H</fullName>
        <ecNumber evidence="1">2.1.1.177</ecNumber>
    </recommendedName>
    <alternativeName>
        <fullName evidence="1">23S rRNA (pseudouridine1915-N3)-methyltransferase</fullName>
    </alternativeName>
    <alternativeName>
        <fullName evidence="1">23S rRNA m3Psi1915 methyltransferase</fullName>
    </alternativeName>
    <alternativeName>
        <fullName evidence="1">rRNA (pseudouridine-N3-)-methyltransferase RlmH</fullName>
    </alternativeName>
</protein>
<comment type="function">
    <text evidence="1">Specifically methylates the pseudouridine at position 1915 (m3Psi1915) in 23S rRNA.</text>
</comment>
<comment type="catalytic activity">
    <reaction evidence="1">
        <text>pseudouridine(1915) in 23S rRNA + S-adenosyl-L-methionine = N(3)-methylpseudouridine(1915) in 23S rRNA + S-adenosyl-L-homocysteine + H(+)</text>
        <dbReference type="Rhea" id="RHEA:42752"/>
        <dbReference type="Rhea" id="RHEA-COMP:10221"/>
        <dbReference type="Rhea" id="RHEA-COMP:10222"/>
        <dbReference type="ChEBI" id="CHEBI:15378"/>
        <dbReference type="ChEBI" id="CHEBI:57856"/>
        <dbReference type="ChEBI" id="CHEBI:59789"/>
        <dbReference type="ChEBI" id="CHEBI:65314"/>
        <dbReference type="ChEBI" id="CHEBI:74486"/>
        <dbReference type="EC" id="2.1.1.177"/>
    </reaction>
</comment>
<comment type="subunit">
    <text evidence="1">Homodimer.</text>
</comment>
<comment type="subcellular location">
    <subcellularLocation>
        <location evidence="1">Cytoplasm</location>
    </subcellularLocation>
</comment>
<comment type="similarity">
    <text evidence="1">Belongs to the RNA methyltransferase RlmH family.</text>
</comment>
<feature type="chain" id="PRO_1000061831" description="Ribosomal RNA large subunit methyltransferase H">
    <location>
        <begin position="1"/>
        <end position="160"/>
    </location>
</feature>
<feature type="binding site" evidence="1">
    <location>
        <position position="108"/>
    </location>
    <ligand>
        <name>S-adenosyl-L-methionine</name>
        <dbReference type="ChEBI" id="CHEBI:59789"/>
    </ligand>
</feature>
<proteinExistence type="inferred from homology"/>
<organism>
    <name type="scientific">Rhodopseudomonas palustris (strain BisA53)</name>
    <dbReference type="NCBI Taxonomy" id="316055"/>
    <lineage>
        <taxon>Bacteria</taxon>
        <taxon>Pseudomonadati</taxon>
        <taxon>Pseudomonadota</taxon>
        <taxon>Alphaproteobacteria</taxon>
        <taxon>Hyphomicrobiales</taxon>
        <taxon>Nitrobacteraceae</taxon>
        <taxon>Rhodopseudomonas</taxon>
    </lineage>
</organism>